<reference key="1">
    <citation type="journal article" date="2009" name="Science">
        <title>The dynamics and time scale of ongoing genomic erosion in symbiotic bacteria.</title>
        <authorList>
            <person name="Moran N.A."/>
            <person name="McLaughlin H.J."/>
            <person name="Sorek R."/>
        </authorList>
    </citation>
    <scope>NUCLEOTIDE SEQUENCE [LARGE SCALE GENOMIC DNA]</scope>
    <source>
        <strain>5A</strain>
    </source>
</reference>
<evidence type="ECO:0000255" key="1">
    <source>
        <dbReference type="HAMAP-Rule" id="MF_01569"/>
    </source>
</evidence>
<keyword id="KW-0030">Aminoacyl-tRNA synthetase</keyword>
<keyword id="KW-0067">ATP-binding</keyword>
<keyword id="KW-0963">Cytoplasm</keyword>
<keyword id="KW-0436">Ligase</keyword>
<keyword id="KW-0547">Nucleotide-binding</keyword>
<keyword id="KW-0648">Protein biosynthesis</keyword>
<organism>
    <name type="scientific">Buchnera aphidicola subsp. Acyrthosiphon pisum (strain 5A)</name>
    <dbReference type="NCBI Taxonomy" id="563178"/>
    <lineage>
        <taxon>Bacteria</taxon>
        <taxon>Pseudomonadati</taxon>
        <taxon>Pseudomonadota</taxon>
        <taxon>Gammaproteobacteria</taxon>
        <taxon>Enterobacterales</taxon>
        <taxon>Erwiniaceae</taxon>
        <taxon>Buchnera</taxon>
    </lineage>
</organism>
<protein>
    <recommendedName>
        <fullName evidence="1">Proline--tRNA ligase</fullName>
        <ecNumber evidence="1">6.1.1.15</ecNumber>
    </recommendedName>
    <alternativeName>
        <fullName evidence="1">Prolyl-tRNA synthetase</fullName>
        <shortName evidence="1">ProRS</shortName>
    </alternativeName>
</protein>
<feature type="chain" id="PRO_1000185491" description="Proline--tRNA ligase">
    <location>
        <begin position="1"/>
        <end position="572"/>
    </location>
</feature>
<name>SYP_BUCA5</name>
<accession>B8D937</accession>
<comment type="function">
    <text evidence="1">Catalyzes the attachment of proline to tRNA(Pro) in a two-step reaction: proline is first activated by ATP to form Pro-AMP and then transferred to the acceptor end of tRNA(Pro). As ProRS can inadvertently accommodate and process non-cognate amino acids such as alanine and cysteine, to avoid such errors it has two additional distinct editing activities against alanine. One activity is designated as 'pretransfer' editing and involves the tRNA(Pro)-independent hydrolysis of activated Ala-AMP. The other activity is designated 'posttransfer' editing and involves deacylation of mischarged Ala-tRNA(Pro). The misacylated Cys-tRNA(Pro) is not edited by ProRS.</text>
</comment>
<comment type="catalytic activity">
    <reaction evidence="1">
        <text>tRNA(Pro) + L-proline + ATP = L-prolyl-tRNA(Pro) + AMP + diphosphate</text>
        <dbReference type="Rhea" id="RHEA:14305"/>
        <dbReference type="Rhea" id="RHEA-COMP:9700"/>
        <dbReference type="Rhea" id="RHEA-COMP:9702"/>
        <dbReference type="ChEBI" id="CHEBI:30616"/>
        <dbReference type="ChEBI" id="CHEBI:33019"/>
        <dbReference type="ChEBI" id="CHEBI:60039"/>
        <dbReference type="ChEBI" id="CHEBI:78442"/>
        <dbReference type="ChEBI" id="CHEBI:78532"/>
        <dbReference type="ChEBI" id="CHEBI:456215"/>
        <dbReference type="EC" id="6.1.1.15"/>
    </reaction>
</comment>
<comment type="subunit">
    <text evidence="1">Homodimer.</text>
</comment>
<comment type="subcellular location">
    <subcellularLocation>
        <location evidence="1">Cytoplasm</location>
    </subcellularLocation>
</comment>
<comment type="domain">
    <text evidence="1">Consists of three domains: the N-terminal catalytic domain, the editing domain and the C-terminal anticodon-binding domain.</text>
</comment>
<comment type="similarity">
    <text evidence="1">Belongs to the class-II aminoacyl-tRNA synthetase family. ProS type 1 subfamily.</text>
</comment>
<proteinExistence type="inferred from homology"/>
<gene>
    <name evidence="1" type="primary">proS</name>
    <name type="ordered locus">BUAP5A_235</name>
</gene>
<sequence>MLTSQYLLSTSKDIPYDAKIISHQLMIRSGMIRKTSSGLYVWLPTGMRVLKKIKNIITTEMEKINALEILMPIIQPEYLWKESGRLNLYGEELLRFLDRRKNQFILGPTNEEVVTNFIGSEIHSYKQLPLTVYQIQTKFRDEIRPRFGIIRTREFTMKDAYSFHINQSCLENTYNKFYDSYINIFKKMNLNFCAVKADSGSMGGNISHEFQAFSQNGEDEIVFSNDKLYSSNMNMAESIETIDFFKKKYSSCLIKNKTNTKKSIIMSEKLNTPLINQIQTFLIQTKINDITSIAALLIRGDHELNFFKVEKIDIINKPLVFLNEKEVISLIGVKKEFLGPLGLKVPIIADISTFNMKNFTIGSNINKHFFINVNWNIDLPMPIFKDIRKVTKNDLSPNGSGYLNIKQSIEIGHIFQLGQKYSRKIQQSVKIKNGNLKNLYMGCYGIGITRIAAAVIEQHHDKNGIIWPDSIAPFEVVILPINMKKDNKIKIIAHFLYKKFKKTGIDVILDDRDERPGVMFNEVDLIGIPHQIIISKRSINYDNVEYRERKNKENILINIKDIKNFIIQKLKK</sequence>
<dbReference type="EC" id="6.1.1.15" evidence="1"/>
<dbReference type="EMBL" id="CP001161">
    <property type="protein sequence ID" value="ACL30608.1"/>
    <property type="molecule type" value="Genomic_DNA"/>
</dbReference>
<dbReference type="RefSeq" id="WP_009874196.1">
    <property type="nucleotide sequence ID" value="NC_011833.1"/>
</dbReference>
<dbReference type="SMR" id="B8D937"/>
<dbReference type="KEGG" id="bap:BUAP5A_235"/>
<dbReference type="HOGENOM" id="CLU_016739_0_0_6"/>
<dbReference type="OrthoDB" id="9809052at2"/>
<dbReference type="Proteomes" id="UP000006904">
    <property type="component" value="Chromosome"/>
</dbReference>
<dbReference type="GO" id="GO:0005829">
    <property type="term" value="C:cytosol"/>
    <property type="evidence" value="ECO:0007669"/>
    <property type="project" value="TreeGrafter"/>
</dbReference>
<dbReference type="GO" id="GO:0002161">
    <property type="term" value="F:aminoacyl-tRNA deacylase activity"/>
    <property type="evidence" value="ECO:0007669"/>
    <property type="project" value="InterPro"/>
</dbReference>
<dbReference type="GO" id="GO:0005524">
    <property type="term" value="F:ATP binding"/>
    <property type="evidence" value="ECO:0007669"/>
    <property type="project" value="UniProtKB-UniRule"/>
</dbReference>
<dbReference type="GO" id="GO:0004827">
    <property type="term" value="F:proline-tRNA ligase activity"/>
    <property type="evidence" value="ECO:0007669"/>
    <property type="project" value="UniProtKB-UniRule"/>
</dbReference>
<dbReference type="GO" id="GO:0006433">
    <property type="term" value="P:prolyl-tRNA aminoacylation"/>
    <property type="evidence" value="ECO:0007669"/>
    <property type="project" value="UniProtKB-UniRule"/>
</dbReference>
<dbReference type="CDD" id="cd04334">
    <property type="entry name" value="ProRS-INS"/>
    <property type="match status" value="1"/>
</dbReference>
<dbReference type="CDD" id="cd00861">
    <property type="entry name" value="ProRS_anticodon_short"/>
    <property type="match status" value="1"/>
</dbReference>
<dbReference type="CDD" id="cd00779">
    <property type="entry name" value="ProRS_core_prok"/>
    <property type="match status" value="1"/>
</dbReference>
<dbReference type="Gene3D" id="3.40.50.800">
    <property type="entry name" value="Anticodon-binding domain"/>
    <property type="match status" value="1"/>
</dbReference>
<dbReference type="Gene3D" id="3.30.930.10">
    <property type="entry name" value="Bira Bifunctional Protein, Domain 2"/>
    <property type="match status" value="2"/>
</dbReference>
<dbReference type="HAMAP" id="MF_01569">
    <property type="entry name" value="Pro_tRNA_synth_type1"/>
    <property type="match status" value="1"/>
</dbReference>
<dbReference type="InterPro" id="IPR002314">
    <property type="entry name" value="aa-tRNA-synt_IIb"/>
</dbReference>
<dbReference type="InterPro" id="IPR006195">
    <property type="entry name" value="aa-tRNA-synth_II"/>
</dbReference>
<dbReference type="InterPro" id="IPR045864">
    <property type="entry name" value="aa-tRNA-synth_II/BPL/LPL"/>
</dbReference>
<dbReference type="InterPro" id="IPR004154">
    <property type="entry name" value="Anticodon-bd"/>
</dbReference>
<dbReference type="InterPro" id="IPR036621">
    <property type="entry name" value="Anticodon-bd_dom_sf"/>
</dbReference>
<dbReference type="InterPro" id="IPR002316">
    <property type="entry name" value="Pro-tRNA-ligase_IIa"/>
</dbReference>
<dbReference type="InterPro" id="IPR004500">
    <property type="entry name" value="Pro-tRNA-synth_IIa_bac-type"/>
</dbReference>
<dbReference type="InterPro" id="IPR023717">
    <property type="entry name" value="Pro-tRNA-Synthase_IIa_type1"/>
</dbReference>
<dbReference type="InterPro" id="IPR050062">
    <property type="entry name" value="Pro-tRNA_synthetase"/>
</dbReference>
<dbReference type="InterPro" id="IPR044140">
    <property type="entry name" value="ProRS_anticodon_short"/>
</dbReference>
<dbReference type="InterPro" id="IPR033730">
    <property type="entry name" value="ProRS_core_prok"/>
</dbReference>
<dbReference type="InterPro" id="IPR036754">
    <property type="entry name" value="YbaK/aa-tRNA-synt-asso_dom_sf"/>
</dbReference>
<dbReference type="InterPro" id="IPR007214">
    <property type="entry name" value="YbaK/aa-tRNA-synth-assoc-dom"/>
</dbReference>
<dbReference type="NCBIfam" id="NF006625">
    <property type="entry name" value="PRK09194.1"/>
    <property type="match status" value="1"/>
</dbReference>
<dbReference type="NCBIfam" id="TIGR00409">
    <property type="entry name" value="proS_fam_II"/>
    <property type="match status" value="1"/>
</dbReference>
<dbReference type="PANTHER" id="PTHR42753">
    <property type="entry name" value="MITOCHONDRIAL RIBOSOME PROTEIN L39/PROLYL-TRNA LIGASE FAMILY MEMBER"/>
    <property type="match status" value="1"/>
</dbReference>
<dbReference type="PANTHER" id="PTHR42753:SF2">
    <property type="entry name" value="PROLINE--TRNA LIGASE"/>
    <property type="match status" value="1"/>
</dbReference>
<dbReference type="Pfam" id="PF03129">
    <property type="entry name" value="HGTP_anticodon"/>
    <property type="match status" value="1"/>
</dbReference>
<dbReference type="Pfam" id="PF00587">
    <property type="entry name" value="tRNA-synt_2b"/>
    <property type="match status" value="1"/>
</dbReference>
<dbReference type="Pfam" id="PF04073">
    <property type="entry name" value="tRNA_edit"/>
    <property type="match status" value="1"/>
</dbReference>
<dbReference type="PRINTS" id="PR01046">
    <property type="entry name" value="TRNASYNTHPRO"/>
</dbReference>
<dbReference type="SUPFAM" id="SSF52954">
    <property type="entry name" value="Class II aaRS ABD-related"/>
    <property type="match status" value="1"/>
</dbReference>
<dbReference type="SUPFAM" id="SSF55681">
    <property type="entry name" value="Class II aaRS and biotin synthetases"/>
    <property type="match status" value="1"/>
</dbReference>
<dbReference type="SUPFAM" id="SSF55826">
    <property type="entry name" value="YbaK/ProRS associated domain"/>
    <property type="match status" value="1"/>
</dbReference>
<dbReference type="PROSITE" id="PS50862">
    <property type="entry name" value="AA_TRNA_LIGASE_II"/>
    <property type="match status" value="1"/>
</dbReference>